<gene>
    <name evidence="1" type="primary">torD</name>
    <name type="ordered locus">Fbal_2193</name>
</gene>
<accession>E1SVR5</accession>
<reference key="1">
    <citation type="journal article" date="2010" name="Stand. Genomic Sci.">
        <title>Complete genome sequence of Ferrimonas balearica type strain (PAT).</title>
        <authorList>
            <person name="Nolan M."/>
            <person name="Sikorski J."/>
            <person name="Davenport K."/>
            <person name="Lucas S."/>
            <person name="Del Rio T.G."/>
            <person name="Tice H."/>
            <person name="Cheng J.F."/>
            <person name="Goodwin L."/>
            <person name="Pitluck S."/>
            <person name="Liolios K."/>
            <person name="Ivanova N."/>
            <person name="Mavromatis K."/>
            <person name="Ovchinnikova G."/>
            <person name="Pati A."/>
            <person name="Chen A."/>
            <person name="Palaniappan K."/>
            <person name="Land M."/>
            <person name="Hauser L."/>
            <person name="Chang Y.J."/>
            <person name="Jeffries C.D."/>
            <person name="Tapia R."/>
            <person name="Brettin T."/>
            <person name="Detter J.C."/>
            <person name="Han C."/>
            <person name="Yasawong M."/>
            <person name="Rohde M."/>
            <person name="Tindall B.J."/>
            <person name="Goker M."/>
            <person name="Woyke T."/>
            <person name="Bristow J."/>
            <person name="Eisen J.A."/>
            <person name="Markowitz V."/>
            <person name="Hugenholtz P."/>
            <person name="Kyrpides N.C."/>
            <person name="Klenk H.P."/>
            <person name="Lapidus A."/>
        </authorList>
    </citation>
    <scope>NUCLEOTIDE SEQUENCE [LARGE SCALE GENOMIC DNA]</scope>
    <source>
        <strain>DSM 9799 / CCM 4581 / KCTC 23876 / PAT</strain>
    </source>
</reference>
<name>TORD_FERBD</name>
<evidence type="ECO:0000255" key="1">
    <source>
        <dbReference type="HAMAP-Rule" id="MF_01150"/>
    </source>
</evidence>
<protein>
    <recommendedName>
        <fullName evidence="1">Chaperone protein TorD</fullName>
    </recommendedName>
</protein>
<dbReference type="EMBL" id="CP002209">
    <property type="protein sequence ID" value="ADN76396.1"/>
    <property type="molecule type" value="Genomic_DNA"/>
</dbReference>
<dbReference type="RefSeq" id="WP_013345702.1">
    <property type="nucleotide sequence ID" value="NC_014541.1"/>
</dbReference>
<dbReference type="SMR" id="E1SVR5"/>
<dbReference type="STRING" id="550540.Fbal_2193"/>
<dbReference type="GeneID" id="67182392"/>
<dbReference type="KEGG" id="fbl:Fbal_2193"/>
<dbReference type="eggNOG" id="COG3381">
    <property type="taxonomic scope" value="Bacteria"/>
</dbReference>
<dbReference type="HOGENOM" id="CLU_077650_4_0_6"/>
<dbReference type="OrthoDB" id="7849731at2"/>
<dbReference type="Proteomes" id="UP000006683">
    <property type="component" value="Chromosome"/>
</dbReference>
<dbReference type="GO" id="GO:0005737">
    <property type="term" value="C:cytoplasm"/>
    <property type="evidence" value="ECO:0007669"/>
    <property type="project" value="UniProtKB-SubCell"/>
</dbReference>
<dbReference type="GO" id="GO:0051259">
    <property type="term" value="P:protein complex oligomerization"/>
    <property type="evidence" value="ECO:0007669"/>
    <property type="project" value="InterPro"/>
</dbReference>
<dbReference type="GO" id="GO:0006457">
    <property type="term" value="P:protein folding"/>
    <property type="evidence" value="ECO:0007669"/>
    <property type="project" value="UniProtKB-UniRule"/>
</dbReference>
<dbReference type="Gene3D" id="1.20.120.1820">
    <property type="match status" value="1"/>
</dbReference>
<dbReference type="Gene3D" id="1.20.1280.20">
    <property type="entry name" value="HscB, C-terminal domain"/>
    <property type="match status" value="1"/>
</dbReference>
<dbReference type="HAMAP" id="MF_01150">
    <property type="entry name" value="TorD"/>
    <property type="match status" value="1"/>
</dbReference>
<dbReference type="InterPro" id="IPR023069">
    <property type="entry name" value="Chaperone_TorD"/>
</dbReference>
<dbReference type="InterPro" id="IPR020945">
    <property type="entry name" value="DMSO/NO3_reduct_chaperone"/>
</dbReference>
<dbReference type="InterPro" id="IPR036386">
    <property type="entry name" value="HscB_C_sf"/>
</dbReference>
<dbReference type="InterPro" id="IPR036411">
    <property type="entry name" value="TorD-like_sf"/>
</dbReference>
<dbReference type="InterPro" id="IPR050289">
    <property type="entry name" value="TorD/DmsD_chaperones"/>
</dbReference>
<dbReference type="NCBIfam" id="NF003442">
    <property type="entry name" value="PRK04976.1"/>
    <property type="match status" value="1"/>
</dbReference>
<dbReference type="PANTHER" id="PTHR34227:SF11">
    <property type="entry name" value="CHAPERONE PROTEIN TORD"/>
    <property type="match status" value="1"/>
</dbReference>
<dbReference type="PANTHER" id="PTHR34227">
    <property type="entry name" value="CHAPERONE PROTEIN YCDY"/>
    <property type="match status" value="1"/>
</dbReference>
<dbReference type="Pfam" id="PF02613">
    <property type="entry name" value="Nitrate_red_del"/>
    <property type="match status" value="1"/>
</dbReference>
<dbReference type="SUPFAM" id="SSF89155">
    <property type="entry name" value="TorD-like"/>
    <property type="match status" value="1"/>
</dbReference>
<organism>
    <name type="scientific">Ferrimonas balearica (strain DSM 9799 / CCM 4581 / KCTC 23876 / PAT)</name>
    <dbReference type="NCBI Taxonomy" id="550540"/>
    <lineage>
        <taxon>Bacteria</taxon>
        <taxon>Pseudomonadati</taxon>
        <taxon>Pseudomonadota</taxon>
        <taxon>Gammaproteobacteria</taxon>
        <taxon>Alteromonadales</taxon>
        <taxon>Ferrimonadaceae</taxon>
        <taxon>Ferrimonas</taxon>
    </lineage>
</organism>
<feature type="chain" id="PRO_0000414894" description="Chaperone protein TorD">
    <location>
        <begin position="1"/>
        <end position="216"/>
    </location>
</feature>
<comment type="function">
    <text evidence="1">Involved in the biogenesis of TorA. Acts on TorA before the insertion of the molybdenum cofactor and, as a result, probably favors a conformation of the apoenzyme that is competent for acquiring the cofactor.</text>
</comment>
<comment type="subcellular location">
    <subcellularLocation>
        <location evidence="1">Cytoplasm</location>
    </subcellularLocation>
</comment>
<comment type="similarity">
    <text evidence="1">Belongs to the TorD/DmsD family. TorD subfamily.</text>
</comment>
<sequence>MDEQEIREEVALAERRATLYWWFASMLCRELDSDQLNTLCSESGRVLLDALAEEPSLAPGCQKLRRALAGVQVLATPQLELAADYATAFLGDHLGSAPPYASVYVEPGGMMFQHPHQQMVQWLQQWQLAVSFDGNEPADHFAIMLDLMGNLVLKGVDSPEAQSAQSALLAEMLPPMRRWVTQCQRQPGFYAALAELLLAFVSLDQTLIEGEFSLAQ</sequence>
<keyword id="KW-0143">Chaperone</keyword>
<keyword id="KW-0963">Cytoplasm</keyword>
<keyword id="KW-1185">Reference proteome</keyword>
<proteinExistence type="inferred from homology"/>